<name>ACG_MYCTO</name>
<organism>
    <name type="scientific">Mycobacterium tuberculosis (strain CDC 1551 / Oshkosh)</name>
    <dbReference type="NCBI Taxonomy" id="83331"/>
    <lineage>
        <taxon>Bacteria</taxon>
        <taxon>Bacillati</taxon>
        <taxon>Actinomycetota</taxon>
        <taxon>Actinomycetes</taxon>
        <taxon>Mycobacteriales</taxon>
        <taxon>Mycobacteriaceae</taxon>
        <taxon>Mycobacterium</taxon>
        <taxon>Mycobacterium tuberculosis complex</taxon>
    </lineage>
</organism>
<sequence length="331" mass="36559">MPDTMVTTDVIKSAVQLACRAPSLHNSQPWRWIAEDHTVALFLDKDRVLYATDHSGREALLGCGAVLDHFRVAMAAAGTTANVERFPNPNDPLHLASIDFSPADFVTEGHRLRADAILLRRTDRLPFAEPPDWDLVESQLRTTVTADTVRIDVIADDMRPELAAASKLTESLRLYDSSYHAELFWWTGAFETSEGIPHSSLVSAAESDRVTFGRDFPVVANTDRRPEFGHDRSKVLVLSTYDNERASLLRCGEMLSAVLLDATMAGLATCTLTHITELHASRDLVAALIGQPATPQALVRVGLAPEMEEPPPATPRRPIDEVFHVRAKDHR</sequence>
<proteinExistence type="inferred from homology"/>
<protein>
    <recommendedName>
        <fullName>Putative NAD(P)H nitroreductase acg</fullName>
        <ecNumber>1.-.-.-</ecNumber>
    </recommendedName>
</protein>
<dbReference type="EC" id="1.-.-.-"/>
<dbReference type="EMBL" id="AE000516">
    <property type="protein sequence ID" value="AAK46370.1"/>
    <property type="status" value="ALT_INIT"/>
    <property type="molecule type" value="Genomic_DNA"/>
</dbReference>
<dbReference type="PIR" id="G70942">
    <property type="entry name" value="G70942"/>
</dbReference>
<dbReference type="RefSeq" id="WP_003410193.1">
    <property type="nucleotide sequence ID" value="NZ_KK341227.1"/>
</dbReference>
<dbReference type="SMR" id="P9WIZ8"/>
<dbReference type="KEGG" id="mtc:MT2091"/>
<dbReference type="PATRIC" id="fig|83331.31.peg.2256"/>
<dbReference type="HOGENOM" id="CLU_051479_1_0_11"/>
<dbReference type="Proteomes" id="UP000001020">
    <property type="component" value="Chromosome"/>
</dbReference>
<dbReference type="GO" id="GO:0016491">
    <property type="term" value="F:oxidoreductase activity"/>
    <property type="evidence" value="ECO:0007669"/>
    <property type="project" value="UniProtKB-KW"/>
</dbReference>
<dbReference type="Gene3D" id="3.40.109.10">
    <property type="entry name" value="NADH Oxidase"/>
    <property type="match status" value="2"/>
</dbReference>
<dbReference type="InterPro" id="IPR000415">
    <property type="entry name" value="Nitroreductase-like"/>
</dbReference>
<dbReference type="InterPro" id="IPR050627">
    <property type="entry name" value="Nitroreductase/BluB"/>
</dbReference>
<dbReference type="NCBIfam" id="NF047509">
    <property type="entry name" value="Rv3131_FMN_oxido"/>
    <property type="match status" value="1"/>
</dbReference>
<dbReference type="PANTHER" id="PTHR23026:SF123">
    <property type="entry name" value="NAD(P)H NITROREDUCTASE RV3131-RELATED"/>
    <property type="match status" value="1"/>
</dbReference>
<dbReference type="PANTHER" id="PTHR23026">
    <property type="entry name" value="NADPH NITROREDUCTASE"/>
    <property type="match status" value="1"/>
</dbReference>
<dbReference type="SUPFAM" id="SSF55469">
    <property type="entry name" value="FMN-dependent nitroreductase-like"/>
    <property type="match status" value="2"/>
</dbReference>
<comment type="cofactor">
    <cofactor evidence="2">
        <name>FMN</name>
        <dbReference type="ChEBI" id="CHEBI:58210"/>
    </cofactor>
</comment>
<comment type="similarity">
    <text evidence="2">Belongs to the nitroreductase family.</text>
</comment>
<comment type="sequence caution" evidence="2">
    <conflict type="erroneous initiation">
        <sequence resource="EMBL-CDS" id="AAK46370"/>
    </conflict>
</comment>
<keyword id="KW-0285">Flavoprotein</keyword>
<keyword id="KW-0288">FMN</keyword>
<keyword id="KW-0520">NAD</keyword>
<keyword id="KW-0521">NADP</keyword>
<keyword id="KW-0560">Oxidoreductase</keyword>
<keyword id="KW-1185">Reference proteome</keyword>
<gene>
    <name type="primary">acg</name>
    <name type="ordered locus">MT2091</name>
</gene>
<accession>P9WIZ8</accession>
<accession>L0TB56</accession>
<accession>O53476</accession>
<accession>Q7D7L2</accession>
<reference key="1">
    <citation type="journal article" date="2002" name="J. Bacteriol.">
        <title>Whole-genome comparison of Mycobacterium tuberculosis clinical and laboratory strains.</title>
        <authorList>
            <person name="Fleischmann R.D."/>
            <person name="Alland D."/>
            <person name="Eisen J.A."/>
            <person name="Carpenter L."/>
            <person name="White O."/>
            <person name="Peterson J.D."/>
            <person name="DeBoy R.T."/>
            <person name="Dodson R.J."/>
            <person name="Gwinn M.L."/>
            <person name="Haft D.H."/>
            <person name="Hickey E.K."/>
            <person name="Kolonay J.F."/>
            <person name="Nelson W.C."/>
            <person name="Umayam L.A."/>
            <person name="Ermolaeva M.D."/>
            <person name="Salzberg S.L."/>
            <person name="Delcher A."/>
            <person name="Utterback T.R."/>
            <person name="Weidman J.F."/>
            <person name="Khouri H.M."/>
            <person name="Gill J."/>
            <person name="Mikula A."/>
            <person name="Bishai W."/>
            <person name="Jacobs W.R. Jr."/>
            <person name="Venter J.C."/>
            <person name="Fraser C.M."/>
        </authorList>
    </citation>
    <scope>NUCLEOTIDE SEQUENCE [LARGE SCALE GENOMIC DNA]</scope>
    <source>
        <strain>CDC 1551 / Oshkosh</strain>
    </source>
</reference>
<evidence type="ECO:0000255" key="1"/>
<evidence type="ECO:0000305" key="2"/>
<feature type="chain" id="PRO_0000427917" description="Putative NAD(P)H nitroreductase acg">
    <location>
        <begin position="1"/>
        <end position="331"/>
    </location>
</feature>
<feature type="binding site" evidence="1">
    <location>
        <begin position="28"/>
        <end position="32"/>
    </location>
    <ligand>
        <name>FMN</name>
        <dbReference type="ChEBI" id="CHEBI:58210"/>
    </ligand>
</feature>
<feature type="binding site" evidence="1">
    <location>
        <position position="316"/>
    </location>
    <ligand>
        <name>FMN</name>
        <dbReference type="ChEBI" id="CHEBI:58210"/>
    </ligand>
</feature>